<protein>
    <recommendedName>
        <fullName>Protein farnesyltransferase/geranylgeranyltransferase type-1 subunit alpha</fullName>
        <ecNumber evidence="2">2.5.1.58</ecNumber>
        <ecNumber evidence="8">2.5.1.59</ecNumber>
    </recommendedName>
    <alternativeName>
        <fullName>CAAX farnesyltransferase subunit alpha</fullName>
    </alternativeName>
    <alternativeName>
        <fullName>FTase-alpha</fullName>
    </alternativeName>
    <alternativeName>
        <fullName>Ras proteins prenyltransferase subunit alpha</fullName>
    </alternativeName>
    <alternativeName>
        <fullName>Type I protein geranyl-geranyltransferase subunit alpha</fullName>
        <shortName>GGTase-I-alpha</shortName>
    </alternativeName>
</protein>
<evidence type="ECO:0000250" key="1">
    <source>
        <dbReference type="UniProtKB" id="P29703"/>
    </source>
</evidence>
<evidence type="ECO:0000250" key="2">
    <source>
        <dbReference type="UniProtKB" id="P49354"/>
    </source>
</evidence>
<evidence type="ECO:0000250" key="3">
    <source>
        <dbReference type="UniProtKB" id="Q04631"/>
    </source>
</evidence>
<evidence type="ECO:0000256" key="4">
    <source>
        <dbReference type="SAM" id="MobiDB-lite"/>
    </source>
</evidence>
<evidence type="ECO:0000269" key="5">
    <source>
    </source>
</evidence>
<evidence type="ECO:0000269" key="6">
    <source>
    </source>
</evidence>
<evidence type="ECO:0000305" key="7"/>
<evidence type="ECO:0000305" key="8">
    <source>
    </source>
</evidence>
<dbReference type="EC" id="2.5.1.58" evidence="2"/>
<dbReference type="EC" id="2.5.1.59" evidence="8"/>
<dbReference type="EMBL" id="D49744">
    <property type="protein sequence ID" value="BAA08578.1"/>
    <property type="molecule type" value="mRNA"/>
</dbReference>
<dbReference type="EMBL" id="BC012711">
    <property type="protein sequence ID" value="AAH12711.1"/>
    <property type="molecule type" value="mRNA"/>
</dbReference>
<dbReference type="CCDS" id="CCDS22205.1"/>
<dbReference type="PIR" id="JC4368">
    <property type="entry name" value="JC4368"/>
</dbReference>
<dbReference type="RefSeq" id="NP_032059.1">
    <property type="nucleotide sequence ID" value="NM_008033.4"/>
</dbReference>
<dbReference type="SMR" id="Q61239"/>
<dbReference type="BioGRID" id="199723">
    <property type="interactions" value="4"/>
</dbReference>
<dbReference type="ComplexPortal" id="CPX-2185">
    <property type="entry name" value="Protein farnesyltransferase complex"/>
</dbReference>
<dbReference type="ComplexPortal" id="CPX-2949">
    <property type="entry name" value="Protein geranylgeranyl transferase type I complex"/>
</dbReference>
<dbReference type="FunCoup" id="Q61239">
    <property type="interactions" value="2076"/>
</dbReference>
<dbReference type="STRING" id="10090.ENSMUSP00000016138"/>
<dbReference type="BindingDB" id="Q61239"/>
<dbReference type="ChEMBL" id="CHEMBL2096912"/>
<dbReference type="ChEMBL" id="CHEMBL3301421"/>
<dbReference type="GlyGen" id="Q61239">
    <property type="glycosylation" value="3 sites, 1 N-linked glycan (1 site), 1 O-linked glycan (2 sites)"/>
</dbReference>
<dbReference type="iPTMnet" id="Q61239"/>
<dbReference type="PhosphoSitePlus" id="Q61239"/>
<dbReference type="SwissPalm" id="Q61239"/>
<dbReference type="jPOST" id="Q61239"/>
<dbReference type="PaxDb" id="10090-ENSMUSP00000016138"/>
<dbReference type="ProteomicsDB" id="267611"/>
<dbReference type="Pumba" id="Q61239"/>
<dbReference type="Antibodypedia" id="1067">
    <property type="antibodies" value="306 antibodies from 33 providers"/>
</dbReference>
<dbReference type="DNASU" id="14272"/>
<dbReference type="Ensembl" id="ENSMUST00000016138.11">
    <property type="protein sequence ID" value="ENSMUSP00000016138.10"/>
    <property type="gene ID" value="ENSMUSG00000015994.11"/>
</dbReference>
<dbReference type="GeneID" id="14272"/>
<dbReference type="KEGG" id="mmu:14272"/>
<dbReference type="UCSC" id="uc009lhi.1">
    <property type="organism name" value="mouse"/>
</dbReference>
<dbReference type="AGR" id="MGI:104683"/>
<dbReference type="CTD" id="2339"/>
<dbReference type="MGI" id="MGI:104683">
    <property type="gene designation" value="Fnta"/>
</dbReference>
<dbReference type="VEuPathDB" id="HostDB:ENSMUSG00000015994"/>
<dbReference type="eggNOG" id="KOG0530">
    <property type="taxonomic scope" value="Eukaryota"/>
</dbReference>
<dbReference type="GeneTree" id="ENSGT00550000074935"/>
<dbReference type="HOGENOM" id="CLU_026582_1_1_1"/>
<dbReference type="InParanoid" id="Q61239"/>
<dbReference type="OMA" id="WAIRTFN"/>
<dbReference type="OrthoDB" id="272289at2759"/>
<dbReference type="PhylomeDB" id="Q61239"/>
<dbReference type="TreeFam" id="TF313038"/>
<dbReference type="BRENDA" id="2.5.1.58">
    <property type="organism ID" value="3474"/>
</dbReference>
<dbReference type="BRENDA" id="2.5.1.59">
    <property type="organism ID" value="3474"/>
</dbReference>
<dbReference type="Reactome" id="R-MMU-111465">
    <property type="pathway name" value="Apoptotic cleavage of cellular proteins"/>
</dbReference>
<dbReference type="Reactome" id="R-MMU-2514859">
    <property type="pathway name" value="Inactivation, recovery and regulation of the phototransduction cascade"/>
</dbReference>
<dbReference type="Reactome" id="R-MMU-9648002">
    <property type="pathway name" value="RAS processing"/>
</dbReference>
<dbReference type="BioGRID-ORCS" id="14272">
    <property type="hits" value="31 hits in 86 CRISPR screens"/>
</dbReference>
<dbReference type="ChiTaRS" id="Fnta">
    <property type="organism name" value="mouse"/>
</dbReference>
<dbReference type="PRO" id="PR:Q61239"/>
<dbReference type="Proteomes" id="UP000000589">
    <property type="component" value="Chromosome 8"/>
</dbReference>
<dbReference type="RNAct" id="Q61239">
    <property type="molecule type" value="protein"/>
</dbReference>
<dbReference type="Bgee" id="ENSMUSG00000015994">
    <property type="expression patterns" value="Expressed in renal medulla collecting duct and 263 other cell types or tissues"/>
</dbReference>
<dbReference type="ExpressionAtlas" id="Q61239">
    <property type="expression patterns" value="baseline and differential"/>
</dbReference>
<dbReference type="GO" id="GO:0005953">
    <property type="term" value="C:CAAX-protein geranylgeranyltransferase complex"/>
    <property type="evidence" value="ECO:0000250"/>
    <property type="project" value="UniProtKB"/>
</dbReference>
<dbReference type="GO" id="GO:0005875">
    <property type="term" value="C:microtubule associated complex"/>
    <property type="evidence" value="ECO:0007669"/>
    <property type="project" value="Ensembl"/>
</dbReference>
<dbReference type="GO" id="GO:0005965">
    <property type="term" value="C:protein farnesyltransferase complex"/>
    <property type="evidence" value="ECO:0000250"/>
    <property type="project" value="UniProtKB"/>
</dbReference>
<dbReference type="GO" id="GO:0010698">
    <property type="term" value="F:acetyltransferase activator activity"/>
    <property type="evidence" value="ECO:0007669"/>
    <property type="project" value="Ensembl"/>
</dbReference>
<dbReference type="GO" id="GO:0043014">
    <property type="term" value="F:alpha-tubulin binding"/>
    <property type="evidence" value="ECO:0007669"/>
    <property type="project" value="Ensembl"/>
</dbReference>
<dbReference type="GO" id="GO:0004662">
    <property type="term" value="F:CAAX-protein geranylgeranyltransferase activity"/>
    <property type="evidence" value="ECO:0007669"/>
    <property type="project" value="UniProtKB-EC"/>
</dbReference>
<dbReference type="GO" id="GO:0008017">
    <property type="term" value="F:microtubule binding"/>
    <property type="evidence" value="ECO:0007669"/>
    <property type="project" value="Ensembl"/>
</dbReference>
<dbReference type="GO" id="GO:0004660">
    <property type="term" value="F:protein farnesyltransferase activity"/>
    <property type="evidence" value="ECO:0000314"/>
    <property type="project" value="UniProtKB"/>
</dbReference>
<dbReference type="GO" id="GO:0004661">
    <property type="term" value="F:protein geranylgeranyltransferase activity"/>
    <property type="evidence" value="ECO:0000315"/>
    <property type="project" value="MGI"/>
</dbReference>
<dbReference type="GO" id="GO:0004663">
    <property type="term" value="F:Rab geranylgeranyltransferase activity"/>
    <property type="evidence" value="ECO:0000314"/>
    <property type="project" value="UniProtKB"/>
</dbReference>
<dbReference type="GO" id="GO:0030971">
    <property type="term" value="F:receptor tyrosine kinase binding"/>
    <property type="evidence" value="ECO:0000353"/>
    <property type="project" value="UniProtKB"/>
</dbReference>
<dbReference type="GO" id="GO:0007167">
    <property type="term" value="P:enzyme-linked receptor protein signaling pathway"/>
    <property type="evidence" value="ECO:0000314"/>
    <property type="project" value="MGI"/>
</dbReference>
<dbReference type="GO" id="GO:0035022">
    <property type="term" value="P:positive regulation of Rac protein signal transduction"/>
    <property type="evidence" value="ECO:0000315"/>
    <property type="project" value="MGI"/>
</dbReference>
<dbReference type="GO" id="GO:1904395">
    <property type="term" value="P:positive regulation of skeletal muscle acetylcholine-gated channel clustering"/>
    <property type="evidence" value="ECO:0000314"/>
    <property type="project" value="MGI"/>
</dbReference>
<dbReference type="GO" id="GO:0018343">
    <property type="term" value="P:protein farnesylation"/>
    <property type="evidence" value="ECO:0000250"/>
    <property type="project" value="UniProtKB"/>
</dbReference>
<dbReference type="GO" id="GO:0018344">
    <property type="term" value="P:protein geranylgeranylation"/>
    <property type="evidence" value="ECO:0000250"/>
    <property type="project" value="UniProtKB"/>
</dbReference>
<dbReference type="GO" id="GO:0060632">
    <property type="term" value="P:regulation of microtubule-based movement"/>
    <property type="evidence" value="ECO:0007669"/>
    <property type="project" value="Ensembl"/>
</dbReference>
<dbReference type="FunFam" id="1.25.40.120:FF:000002">
    <property type="entry name" value="Protein farnesyltransferase/geranylgeranyltransferase type-1 subunit alpha"/>
    <property type="match status" value="1"/>
</dbReference>
<dbReference type="Gene3D" id="1.25.40.120">
    <property type="entry name" value="Protein prenylyltransferase"/>
    <property type="match status" value="1"/>
</dbReference>
<dbReference type="InterPro" id="IPR002088">
    <property type="entry name" value="Prenyl_trans_a"/>
</dbReference>
<dbReference type="PANTHER" id="PTHR11129">
    <property type="entry name" value="PROTEIN FARNESYLTRANSFERASE ALPHA SUBUNIT/RAB GERANYLGERANYL TRANSFERASE ALPHA SUBUNIT"/>
    <property type="match status" value="1"/>
</dbReference>
<dbReference type="PANTHER" id="PTHR11129:SF1">
    <property type="entry name" value="PROTEIN FARNESYLTRANSFERASE_GERANYLGERANYLTRANSFERASE TYPE-1 SUBUNIT ALPHA"/>
    <property type="match status" value="1"/>
</dbReference>
<dbReference type="Pfam" id="PF01239">
    <property type="entry name" value="PPTA"/>
    <property type="match status" value="5"/>
</dbReference>
<dbReference type="SUPFAM" id="SSF48439">
    <property type="entry name" value="Protein prenylyltransferase"/>
    <property type="match status" value="1"/>
</dbReference>
<dbReference type="PROSITE" id="PS51147">
    <property type="entry name" value="PFTA"/>
    <property type="match status" value="5"/>
</dbReference>
<gene>
    <name type="primary">Fnta</name>
</gene>
<sequence length="377" mass="44013">MAATEGVGESAAGGEPGQPEQPPPPPPPPPAQQPQEEEMAAEAGEAAASPMDDGFLSLDSPTYVLYRDRAEWADIDPVPQNDGPNPVVQIIYSEKFRDVYDYFRAVLQRDERSERAFKLTRDAIELNAANYTVWHFRRVLLRSLQKDLQEEMNYITAIIEEQPKNYQVWHHRRVLVEWLKDPSQELEFIADILSQDAKNYHAWQHRQWVIQEFRLWDNELQYVDQLLKEDVRNNSVWNQRHFVISNTTGYSDRAVLEREVQYTLEMIKLVPHNESAWNYLKGILQDRGLSRYPNLLNQLLDLQPSHSSPYLIAFLVDVYEDMLENQCDNKEDILNKALELCEILAKEKDTIRKEYWRYIGRSLQSKHCRESDIPASV</sequence>
<keyword id="KW-0007">Acetylation</keyword>
<keyword id="KW-0460">Magnesium</keyword>
<keyword id="KW-0597">Phosphoprotein</keyword>
<keyword id="KW-0637">Prenyltransferase</keyword>
<keyword id="KW-1185">Reference proteome</keyword>
<keyword id="KW-0677">Repeat</keyword>
<keyword id="KW-0808">Transferase</keyword>
<organism>
    <name type="scientific">Mus musculus</name>
    <name type="common">Mouse</name>
    <dbReference type="NCBI Taxonomy" id="10090"/>
    <lineage>
        <taxon>Eukaryota</taxon>
        <taxon>Metazoa</taxon>
        <taxon>Chordata</taxon>
        <taxon>Craniata</taxon>
        <taxon>Vertebrata</taxon>
        <taxon>Euteleostomi</taxon>
        <taxon>Mammalia</taxon>
        <taxon>Eutheria</taxon>
        <taxon>Euarchontoglires</taxon>
        <taxon>Glires</taxon>
        <taxon>Rodentia</taxon>
        <taxon>Myomorpha</taxon>
        <taxon>Muroidea</taxon>
        <taxon>Muridae</taxon>
        <taxon>Murinae</taxon>
        <taxon>Mus</taxon>
        <taxon>Mus</taxon>
    </lineage>
</organism>
<name>FNTA_MOUSE</name>
<reference key="1">
    <citation type="journal article" date="1995" name="Gene">
        <title>Cloning and sequencing of the murine farnesyltransferase alpha-encoding cDNA from a cell line which expresses the human papillomavirus type-16 E6 gene.</title>
        <authorList>
            <person name="Shirasawa H."/>
            <person name="Kinoshita T."/>
            <person name="Shino Y."/>
            <person name="Mori K."/>
            <person name="Shimizu K."/>
            <person name="Simizu B."/>
        </authorList>
    </citation>
    <scope>NUCLEOTIDE SEQUENCE [MRNA]</scope>
</reference>
<reference key="2">
    <citation type="journal article" date="2004" name="Genome Res.">
        <title>The status, quality, and expansion of the NIH full-length cDNA project: the Mammalian Gene Collection (MGC).</title>
        <authorList>
            <consortium name="The MGC Project Team"/>
        </authorList>
    </citation>
    <scope>NUCLEOTIDE SEQUENCE [LARGE SCALE MRNA]</scope>
</reference>
<reference key="3">
    <citation type="journal article" date="2003" name="Neuron">
        <title>Implication of geranylgeranyltransferase I in synapse formation.</title>
        <authorList>
            <person name="Luo Z.G."/>
            <person name="Je H.S."/>
            <person name="Wang Q."/>
            <person name="Yang F."/>
            <person name="Dobbins G.C."/>
            <person name="Yang Z.H."/>
            <person name="Xiong W.C."/>
            <person name="Lu B."/>
            <person name="Mei L."/>
        </authorList>
    </citation>
    <scope>FUNCTION IN NEUROMUSCULAR JUNCTION DEVELOPMENT</scope>
    <scope>FUNCTION IN RAC1 ACTIVATION</scope>
    <scope>CATALYTIC ACTIVITY</scope>
    <scope>PHOSPHORYLATION</scope>
    <scope>INTERACTION WITH MUSK</scope>
    <scope>ACTIVITY REGULATION</scope>
    <scope>MUTAGENESIS OF LYS-164 AND TYR-200</scope>
</reference>
<reference key="4">
    <citation type="journal article" date="2007" name="Proc. Natl. Acad. Sci. U.S.A.">
        <title>HIV protease inhibitors block the zinc metalloproteinase ZMPSTE24 and lead to an accumulation of prelamin A in cells.</title>
        <authorList>
            <person name="Coffinier C."/>
            <person name="Hudon S.E."/>
            <person name="Farber E.A."/>
            <person name="Chang S.Y."/>
            <person name="Hrycyna C.A."/>
            <person name="Young S.G."/>
            <person name="Fong L.G."/>
        </authorList>
    </citation>
    <scope>FUNCTION</scope>
</reference>
<reference key="5">
    <citation type="journal article" date="2010" name="Cell">
        <title>A tissue-specific atlas of mouse protein phosphorylation and expression.</title>
        <authorList>
            <person name="Huttlin E.L."/>
            <person name="Jedrychowski M.P."/>
            <person name="Elias J.E."/>
            <person name="Goswami T."/>
            <person name="Rad R."/>
            <person name="Beausoleil S.A."/>
            <person name="Villen J."/>
            <person name="Haas W."/>
            <person name="Sowa M.E."/>
            <person name="Gygi S.P."/>
        </authorList>
    </citation>
    <scope>IDENTIFICATION BY MASS SPECTROMETRY [LARGE SCALE ANALYSIS]</scope>
    <source>
        <tissue>Brown adipose tissue</tissue>
        <tissue>Heart</tissue>
        <tissue>Kidney</tissue>
        <tissue>Lung</tissue>
        <tissue>Pancreas</tissue>
        <tissue>Spleen</tissue>
        <tissue>Testis</tissue>
    </source>
</reference>
<proteinExistence type="evidence at protein level"/>
<comment type="function">
    <text evidence="5 6">Essential subunit of both the farnesyltransferase and the geranylgeranyltransferase complex. Contributes to the transfer of a farnesyl or geranylgeranyl moiety from farnesyl or geranylgeranyl diphosphate to a cysteine at the fourth position from the C-terminus of several proteins having the C-terminal sequence Cys-aliphatic-aliphatic-X. May positively regulate neuromuscular junction development downstream of MUSK via its function in RAC1 prenylation and activation.</text>
</comment>
<comment type="catalytic activity">
    <reaction evidence="2">
        <text>L-cysteinyl-[protein] + (2E,6E)-farnesyl diphosphate = S-(2E,6E)-farnesyl-L-cysteinyl-[protein] + diphosphate</text>
        <dbReference type="Rhea" id="RHEA:13345"/>
        <dbReference type="Rhea" id="RHEA-COMP:10131"/>
        <dbReference type="Rhea" id="RHEA-COMP:11535"/>
        <dbReference type="ChEBI" id="CHEBI:29950"/>
        <dbReference type="ChEBI" id="CHEBI:33019"/>
        <dbReference type="ChEBI" id="CHEBI:86019"/>
        <dbReference type="ChEBI" id="CHEBI:175763"/>
        <dbReference type="EC" id="2.5.1.58"/>
    </reaction>
</comment>
<comment type="catalytic activity">
    <reaction evidence="8">
        <text>geranylgeranyl diphosphate + L-cysteinyl-[protein] = S-geranylgeranyl-L-cysteinyl-[protein] + diphosphate</text>
        <dbReference type="Rhea" id="RHEA:21240"/>
        <dbReference type="Rhea" id="RHEA-COMP:10131"/>
        <dbReference type="Rhea" id="RHEA-COMP:11537"/>
        <dbReference type="ChEBI" id="CHEBI:29950"/>
        <dbReference type="ChEBI" id="CHEBI:33019"/>
        <dbReference type="ChEBI" id="CHEBI:57533"/>
        <dbReference type="ChEBI" id="CHEBI:86021"/>
        <dbReference type="EC" id="2.5.1.59"/>
    </reaction>
</comment>
<comment type="cofactor">
    <cofactor evidence="1">
        <name>Mg(2+)</name>
        <dbReference type="ChEBI" id="CHEBI:18420"/>
    </cofactor>
</comment>
<comment type="activity regulation">
    <text evidence="5">Activated by the AGRIN-induced phosphorylation which is mediated by MUSK.</text>
</comment>
<comment type="subunit">
    <text evidence="2 3">Heterodimer of FNTA and FNTB (farnesyltransferase) (By similarity). Heterodimer of FNTA and PGGT1B (geranylgeranyltransferase) (By similarity).</text>
</comment>
<comment type="PTM">
    <text evidence="5">Phosphorylated. Phosphorylation is mediated by MUSK upon AGRIN stimulation and results in the activation of FNTA.</text>
</comment>
<comment type="similarity">
    <text evidence="7">Belongs to the protein prenyltransferase subunit alpha family.</text>
</comment>
<feature type="initiator methionine" description="Removed" evidence="2">
    <location>
        <position position="1"/>
    </location>
</feature>
<feature type="chain" id="PRO_0000119747" description="Protein farnesyltransferase/geranylgeranyltransferase type-1 subunit alpha">
    <location>
        <begin position="2"/>
        <end position="377"/>
    </location>
</feature>
<feature type="repeat" description="PFTA 1">
    <location>
        <begin position="112"/>
        <end position="146"/>
    </location>
</feature>
<feature type="repeat" description="PFTA 2">
    <location>
        <begin position="147"/>
        <end position="181"/>
    </location>
</feature>
<feature type="repeat" description="PFTA 3">
    <location>
        <begin position="182"/>
        <end position="214"/>
    </location>
</feature>
<feature type="repeat" description="PFTA 4">
    <location>
        <begin position="215"/>
        <end position="249"/>
    </location>
</feature>
<feature type="repeat" description="PFTA 5">
    <location>
        <begin position="255"/>
        <end position="289"/>
    </location>
</feature>
<feature type="region of interest" description="Disordered" evidence="4">
    <location>
        <begin position="1"/>
        <end position="55"/>
    </location>
</feature>
<feature type="compositionally biased region" description="Pro residues" evidence="4">
    <location>
        <begin position="19"/>
        <end position="32"/>
    </location>
</feature>
<feature type="modified residue" description="N-acetylalanine" evidence="2">
    <location>
        <position position="2"/>
    </location>
</feature>
<feature type="mutagenesis site" description="Inhibits prenylation activity. In myoblasts, impaired insulin-induced RAC1 activation, possibly due to impaired insulin-induced geranyl-geranyltransferase activation. No effect on MUSK-binding." evidence="5">
    <original>K</original>
    <variation>A</variation>
    <location>
        <position position="164"/>
    </location>
</feature>
<feature type="mutagenesis site" description="Inhibits prenylation activity. In myoblasts, impaired insulin-induced RAC1 activation, possibly due to impaired insulin-induced geranyl-geranyltransferase activation. 68% decrease in MUSK-binding." evidence="5">
    <original>Y</original>
    <variation>F</variation>
    <location>
        <position position="200"/>
    </location>
</feature>
<feature type="sequence conflict" description="In Ref. 2; AAH12711." evidence="7" ref="2">
    <original>D</original>
    <variation>N</variation>
    <location>
        <position position="191"/>
    </location>
</feature>
<accession>Q61239</accession>
<accession>Q921F7</accession>